<comment type="function">
    <text evidence="2">With S4 and S5 plays an important role in translational accuracy.</text>
</comment>
<comment type="function">
    <text evidence="2">Interacts with and stabilizes bases of the 16S rRNA that are involved in tRNA selection in the A site and with the mRNA backbone. Located at the interface of the 30S and 50S subunits, it traverses the body of the 30S subunit contacting proteins on the other side and probably holding the rRNA structure together. The combined cluster of proteins S8, S12 and S17 appears to hold together the shoulder and platform of the 30S subunit.</text>
</comment>
<comment type="subunit">
    <text evidence="2">Part of the 30S ribosomal subunit. Contacts proteins S8 and S17. May interact with IF1 in the 30S initiation complex.</text>
</comment>
<comment type="similarity">
    <text evidence="2">Belongs to the universal ribosomal protein uS12 family.</text>
</comment>
<feature type="chain" id="PRO_1000049809" description="Small ribosomal subunit protein uS12">
    <location>
        <begin position="1"/>
        <end position="144"/>
    </location>
</feature>
<feature type="region of interest" description="Disordered" evidence="3">
    <location>
        <begin position="121"/>
        <end position="144"/>
    </location>
</feature>
<feature type="modified residue" description="3-methylthioaspartic acid" evidence="1">
    <location>
        <position position="103"/>
    </location>
</feature>
<organism>
    <name type="scientific">Roseiflexus sp. (strain RS-1)</name>
    <dbReference type="NCBI Taxonomy" id="357808"/>
    <lineage>
        <taxon>Bacteria</taxon>
        <taxon>Bacillati</taxon>
        <taxon>Chloroflexota</taxon>
        <taxon>Chloroflexia</taxon>
        <taxon>Chloroflexales</taxon>
        <taxon>Roseiflexineae</taxon>
        <taxon>Roseiflexaceae</taxon>
        <taxon>Roseiflexus</taxon>
    </lineage>
</organism>
<accession>A5USJ4</accession>
<keyword id="KW-0488">Methylation</keyword>
<keyword id="KW-0687">Ribonucleoprotein</keyword>
<keyword id="KW-0689">Ribosomal protein</keyword>
<keyword id="KW-0694">RNA-binding</keyword>
<keyword id="KW-0699">rRNA-binding</keyword>
<keyword id="KW-0820">tRNA-binding</keyword>
<name>RS12_ROSS1</name>
<proteinExistence type="inferred from homology"/>
<dbReference type="EMBL" id="CP000686">
    <property type="protein sequence ID" value="ABQ89597.1"/>
    <property type="molecule type" value="Genomic_DNA"/>
</dbReference>
<dbReference type="RefSeq" id="WP_011955950.1">
    <property type="nucleotide sequence ID" value="NC_009523.1"/>
</dbReference>
<dbReference type="SMR" id="A5USJ4"/>
<dbReference type="STRING" id="357808.RoseRS_1190"/>
<dbReference type="KEGG" id="rrs:RoseRS_1190"/>
<dbReference type="eggNOG" id="COG0048">
    <property type="taxonomic scope" value="Bacteria"/>
</dbReference>
<dbReference type="HOGENOM" id="CLU_104295_1_2_0"/>
<dbReference type="OrthoDB" id="9802366at2"/>
<dbReference type="Proteomes" id="UP000006554">
    <property type="component" value="Chromosome"/>
</dbReference>
<dbReference type="GO" id="GO:0015935">
    <property type="term" value="C:small ribosomal subunit"/>
    <property type="evidence" value="ECO:0007669"/>
    <property type="project" value="InterPro"/>
</dbReference>
<dbReference type="GO" id="GO:0019843">
    <property type="term" value="F:rRNA binding"/>
    <property type="evidence" value="ECO:0007669"/>
    <property type="project" value="UniProtKB-UniRule"/>
</dbReference>
<dbReference type="GO" id="GO:0003735">
    <property type="term" value="F:structural constituent of ribosome"/>
    <property type="evidence" value="ECO:0007669"/>
    <property type="project" value="InterPro"/>
</dbReference>
<dbReference type="GO" id="GO:0000049">
    <property type="term" value="F:tRNA binding"/>
    <property type="evidence" value="ECO:0007669"/>
    <property type="project" value="UniProtKB-UniRule"/>
</dbReference>
<dbReference type="GO" id="GO:0006412">
    <property type="term" value="P:translation"/>
    <property type="evidence" value="ECO:0007669"/>
    <property type="project" value="UniProtKB-UniRule"/>
</dbReference>
<dbReference type="CDD" id="cd03368">
    <property type="entry name" value="Ribosomal_S12"/>
    <property type="match status" value="1"/>
</dbReference>
<dbReference type="FunFam" id="2.40.50.140:FF:000001">
    <property type="entry name" value="30S ribosomal protein S12"/>
    <property type="match status" value="1"/>
</dbReference>
<dbReference type="Gene3D" id="2.40.50.140">
    <property type="entry name" value="Nucleic acid-binding proteins"/>
    <property type="match status" value="1"/>
</dbReference>
<dbReference type="HAMAP" id="MF_00403_B">
    <property type="entry name" value="Ribosomal_uS12_B"/>
    <property type="match status" value="1"/>
</dbReference>
<dbReference type="InterPro" id="IPR012340">
    <property type="entry name" value="NA-bd_OB-fold"/>
</dbReference>
<dbReference type="InterPro" id="IPR006032">
    <property type="entry name" value="Ribosomal_uS12"/>
</dbReference>
<dbReference type="InterPro" id="IPR005679">
    <property type="entry name" value="Ribosomal_uS12_bac"/>
</dbReference>
<dbReference type="NCBIfam" id="TIGR00981">
    <property type="entry name" value="rpsL_bact"/>
    <property type="match status" value="1"/>
</dbReference>
<dbReference type="PANTHER" id="PTHR11652">
    <property type="entry name" value="30S RIBOSOMAL PROTEIN S12 FAMILY MEMBER"/>
    <property type="match status" value="1"/>
</dbReference>
<dbReference type="Pfam" id="PF00164">
    <property type="entry name" value="Ribosom_S12_S23"/>
    <property type="match status" value="1"/>
</dbReference>
<dbReference type="PIRSF" id="PIRSF002133">
    <property type="entry name" value="Ribosomal_S12/S23"/>
    <property type="match status" value="1"/>
</dbReference>
<dbReference type="PRINTS" id="PR01034">
    <property type="entry name" value="RIBOSOMALS12"/>
</dbReference>
<dbReference type="SUPFAM" id="SSF50249">
    <property type="entry name" value="Nucleic acid-binding proteins"/>
    <property type="match status" value="1"/>
</dbReference>
<dbReference type="PROSITE" id="PS00055">
    <property type="entry name" value="RIBOSOMAL_S12"/>
    <property type="match status" value="1"/>
</dbReference>
<sequence>MPTINQLVRKPRKRVTKKVKAPALRFSLNVLKGKLTRGKGSPFKRGVCTQVRTMTPKKPNSALRKIARVRLSNGMEVTAYIPGEGHNLQEHSVVLIRGGRVKDLPGVRYHIVRGTLDAQGVANRKQGRSKYGTKKASAVPAKKK</sequence>
<gene>
    <name evidence="2" type="primary">rpsL</name>
    <name type="ordered locus">RoseRS_1190</name>
</gene>
<evidence type="ECO:0000250" key="1"/>
<evidence type="ECO:0000255" key="2">
    <source>
        <dbReference type="HAMAP-Rule" id="MF_00403"/>
    </source>
</evidence>
<evidence type="ECO:0000256" key="3">
    <source>
        <dbReference type="SAM" id="MobiDB-lite"/>
    </source>
</evidence>
<evidence type="ECO:0000305" key="4"/>
<reference key="1">
    <citation type="submission" date="2007-04" db="EMBL/GenBank/DDBJ databases">
        <title>Complete sequence of Roseiflexus sp. RS-1.</title>
        <authorList>
            <consortium name="US DOE Joint Genome Institute"/>
            <person name="Copeland A."/>
            <person name="Lucas S."/>
            <person name="Lapidus A."/>
            <person name="Barry K."/>
            <person name="Detter J.C."/>
            <person name="Glavina del Rio T."/>
            <person name="Hammon N."/>
            <person name="Israni S."/>
            <person name="Dalin E."/>
            <person name="Tice H."/>
            <person name="Pitluck S."/>
            <person name="Chertkov O."/>
            <person name="Brettin T."/>
            <person name="Bruce D."/>
            <person name="Han C."/>
            <person name="Schmutz J."/>
            <person name="Larimer F."/>
            <person name="Land M."/>
            <person name="Hauser L."/>
            <person name="Kyrpides N."/>
            <person name="Mikhailova N."/>
            <person name="Bryant D.A."/>
            <person name="Richardson P."/>
        </authorList>
    </citation>
    <scope>NUCLEOTIDE SEQUENCE [LARGE SCALE GENOMIC DNA]</scope>
    <source>
        <strain>RS-1</strain>
    </source>
</reference>
<protein>
    <recommendedName>
        <fullName evidence="2">Small ribosomal subunit protein uS12</fullName>
    </recommendedName>
    <alternativeName>
        <fullName evidence="4">30S ribosomal protein S12</fullName>
    </alternativeName>
</protein>